<proteinExistence type="inferred from homology"/>
<dbReference type="EC" id="3.4.24.-" evidence="1"/>
<dbReference type="EMBL" id="CP001848">
    <property type="protein sequence ID" value="ADB18226.1"/>
    <property type="molecule type" value="Genomic_DNA"/>
</dbReference>
<dbReference type="SMR" id="D2QZ34"/>
<dbReference type="STRING" id="530564.Psta_3565"/>
<dbReference type="KEGG" id="psl:Psta_3565"/>
<dbReference type="eggNOG" id="COG0465">
    <property type="taxonomic scope" value="Bacteria"/>
</dbReference>
<dbReference type="HOGENOM" id="CLU_000688_16_2_0"/>
<dbReference type="OrthoDB" id="9809379at2"/>
<dbReference type="Proteomes" id="UP000001887">
    <property type="component" value="Chromosome"/>
</dbReference>
<dbReference type="GO" id="GO:0005886">
    <property type="term" value="C:plasma membrane"/>
    <property type="evidence" value="ECO:0007669"/>
    <property type="project" value="UniProtKB-SubCell"/>
</dbReference>
<dbReference type="GO" id="GO:0005524">
    <property type="term" value="F:ATP binding"/>
    <property type="evidence" value="ECO:0007669"/>
    <property type="project" value="UniProtKB-UniRule"/>
</dbReference>
<dbReference type="GO" id="GO:0016887">
    <property type="term" value="F:ATP hydrolysis activity"/>
    <property type="evidence" value="ECO:0007669"/>
    <property type="project" value="UniProtKB-UniRule"/>
</dbReference>
<dbReference type="GO" id="GO:0004176">
    <property type="term" value="F:ATP-dependent peptidase activity"/>
    <property type="evidence" value="ECO:0007669"/>
    <property type="project" value="InterPro"/>
</dbReference>
<dbReference type="GO" id="GO:0004222">
    <property type="term" value="F:metalloendopeptidase activity"/>
    <property type="evidence" value="ECO:0007669"/>
    <property type="project" value="InterPro"/>
</dbReference>
<dbReference type="GO" id="GO:0008270">
    <property type="term" value="F:zinc ion binding"/>
    <property type="evidence" value="ECO:0007669"/>
    <property type="project" value="UniProtKB-UniRule"/>
</dbReference>
<dbReference type="GO" id="GO:0030163">
    <property type="term" value="P:protein catabolic process"/>
    <property type="evidence" value="ECO:0007669"/>
    <property type="project" value="UniProtKB-UniRule"/>
</dbReference>
<dbReference type="GO" id="GO:0006508">
    <property type="term" value="P:proteolysis"/>
    <property type="evidence" value="ECO:0007669"/>
    <property type="project" value="UniProtKB-KW"/>
</dbReference>
<dbReference type="CDD" id="cd19501">
    <property type="entry name" value="RecA-like_FtsH"/>
    <property type="match status" value="1"/>
</dbReference>
<dbReference type="FunFam" id="1.10.8.60:FF:000001">
    <property type="entry name" value="ATP-dependent zinc metalloprotease FtsH"/>
    <property type="match status" value="1"/>
</dbReference>
<dbReference type="FunFam" id="1.20.58.760:FF:000001">
    <property type="entry name" value="ATP-dependent zinc metalloprotease FtsH"/>
    <property type="match status" value="1"/>
</dbReference>
<dbReference type="FunFam" id="3.40.50.300:FF:000001">
    <property type="entry name" value="ATP-dependent zinc metalloprotease FtsH"/>
    <property type="match status" value="1"/>
</dbReference>
<dbReference type="Gene3D" id="1.10.8.60">
    <property type="match status" value="1"/>
</dbReference>
<dbReference type="Gene3D" id="3.40.50.300">
    <property type="entry name" value="P-loop containing nucleotide triphosphate hydrolases"/>
    <property type="match status" value="1"/>
</dbReference>
<dbReference type="Gene3D" id="1.20.58.760">
    <property type="entry name" value="Peptidase M41"/>
    <property type="match status" value="1"/>
</dbReference>
<dbReference type="HAMAP" id="MF_01458">
    <property type="entry name" value="FtsH"/>
    <property type="match status" value="1"/>
</dbReference>
<dbReference type="InterPro" id="IPR003593">
    <property type="entry name" value="AAA+_ATPase"/>
</dbReference>
<dbReference type="InterPro" id="IPR041569">
    <property type="entry name" value="AAA_lid_3"/>
</dbReference>
<dbReference type="InterPro" id="IPR003959">
    <property type="entry name" value="ATPase_AAA_core"/>
</dbReference>
<dbReference type="InterPro" id="IPR003960">
    <property type="entry name" value="ATPase_AAA_CS"/>
</dbReference>
<dbReference type="InterPro" id="IPR005936">
    <property type="entry name" value="FtsH"/>
</dbReference>
<dbReference type="InterPro" id="IPR027417">
    <property type="entry name" value="P-loop_NTPase"/>
</dbReference>
<dbReference type="InterPro" id="IPR000642">
    <property type="entry name" value="Peptidase_M41"/>
</dbReference>
<dbReference type="InterPro" id="IPR037219">
    <property type="entry name" value="Peptidase_M41-like"/>
</dbReference>
<dbReference type="NCBIfam" id="TIGR01241">
    <property type="entry name" value="FtsH_fam"/>
    <property type="match status" value="1"/>
</dbReference>
<dbReference type="PANTHER" id="PTHR23076:SF97">
    <property type="entry name" value="ATP-DEPENDENT ZINC METALLOPROTEASE YME1L1"/>
    <property type="match status" value="1"/>
</dbReference>
<dbReference type="PANTHER" id="PTHR23076">
    <property type="entry name" value="METALLOPROTEASE M41 FTSH"/>
    <property type="match status" value="1"/>
</dbReference>
<dbReference type="Pfam" id="PF00004">
    <property type="entry name" value="AAA"/>
    <property type="match status" value="1"/>
</dbReference>
<dbReference type="Pfam" id="PF17862">
    <property type="entry name" value="AAA_lid_3"/>
    <property type="match status" value="1"/>
</dbReference>
<dbReference type="Pfam" id="PF01434">
    <property type="entry name" value="Peptidase_M41"/>
    <property type="match status" value="1"/>
</dbReference>
<dbReference type="SMART" id="SM00382">
    <property type="entry name" value="AAA"/>
    <property type="match status" value="1"/>
</dbReference>
<dbReference type="SUPFAM" id="SSF140990">
    <property type="entry name" value="FtsH protease domain-like"/>
    <property type="match status" value="1"/>
</dbReference>
<dbReference type="SUPFAM" id="SSF52540">
    <property type="entry name" value="P-loop containing nucleoside triphosphate hydrolases"/>
    <property type="match status" value="1"/>
</dbReference>
<dbReference type="PROSITE" id="PS00674">
    <property type="entry name" value="AAA"/>
    <property type="match status" value="1"/>
</dbReference>
<name>FTSH_PIRSD</name>
<reference key="1">
    <citation type="journal article" date="2009" name="Stand. Genomic Sci.">
        <title>Complete genome sequence of Pirellula staleyi type strain (ATCC 27377).</title>
        <authorList>
            <person name="Clum A."/>
            <person name="Tindall B.J."/>
            <person name="Sikorski J."/>
            <person name="Ivanova N."/>
            <person name="Mavrommatis K."/>
            <person name="Lucas S."/>
            <person name="Glavina del Rio T."/>
            <person name="Nolan M."/>
            <person name="Chen F."/>
            <person name="Tice H."/>
            <person name="Pitluck S."/>
            <person name="Cheng J.F."/>
            <person name="Chertkov O."/>
            <person name="Brettin T."/>
            <person name="Han C."/>
            <person name="Detter J.C."/>
            <person name="Kuske C."/>
            <person name="Bruce D."/>
            <person name="Goodwin L."/>
            <person name="Ovchinikova G."/>
            <person name="Pati A."/>
            <person name="Mikhailova N."/>
            <person name="Chen A."/>
            <person name="Palaniappan K."/>
            <person name="Land M."/>
            <person name="Hauser L."/>
            <person name="Chang Y.J."/>
            <person name="Jeffries C.D."/>
            <person name="Chain P."/>
            <person name="Rohde M."/>
            <person name="Goker M."/>
            <person name="Bristow J."/>
            <person name="Eisen J.A."/>
            <person name="Markowitz V."/>
            <person name="Hugenholtz P."/>
            <person name="Kyrpides N.C."/>
            <person name="Klenk H.P."/>
            <person name="Lapidus A."/>
        </authorList>
    </citation>
    <scope>NUCLEOTIDE SEQUENCE [LARGE SCALE GENOMIC DNA]</scope>
    <source>
        <strain>ATCC 27377 / DSM 6068 / ICPB 4128</strain>
    </source>
</reference>
<organism>
    <name type="scientific">Pirellula staleyi (strain ATCC 27377 / DSM 6068 / ICPB 4128)</name>
    <name type="common">Pirella staleyi</name>
    <dbReference type="NCBI Taxonomy" id="530564"/>
    <lineage>
        <taxon>Bacteria</taxon>
        <taxon>Pseudomonadati</taxon>
        <taxon>Planctomycetota</taxon>
        <taxon>Planctomycetia</taxon>
        <taxon>Pirellulales</taxon>
        <taxon>Pirellulaceae</taxon>
        <taxon>Pirellula</taxon>
    </lineage>
</organism>
<gene>
    <name evidence="1" type="primary">ftsH</name>
    <name type="ordered locus">Psta_3565</name>
</gene>
<feature type="chain" id="PRO_0000400377" description="ATP-dependent zinc metalloprotease FtsH">
    <location>
        <begin position="1"/>
        <end position="700"/>
    </location>
</feature>
<feature type="topological domain" description="Cytoplasmic" evidence="1">
    <location>
        <begin position="1"/>
        <end position="20"/>
    </location>
</feature>
<feature type="transmembrane region" description="Helical" evidence="1">
    <location>
        <begin position="21"/>
        <end position="41"/>
    </location>
</feature>
<feature type="topological domain" description="Periplasmic" evidence="1">
    <location>
        <begin position="42"/>
        <end position="171"/>
    </location>
</feature>
<feature type="transmembrane region" description="Helical" evidence="1">
    <location>
        <begin position="172"/>
        <end position="192"/>
    </location>
</feature>
<feature type="topological domain" description="Cytoplasmic" evidence="1">
    <location>
        <begin position="193"/>
        <end position="700"/>
    </location>
</feature>
<feature type="active site" evidence="1">
    <location>
        <position position="485"/>
    </location>
</feature>
<feature type="binding site" evidence="1">
    <location>
        <begin position="262"/>
        <end position="269"/>
    </location>
    <ligand>
        <name>ATP</name>
        <dbReference type="ChEBI" id="CHEBI:30616"/>
    </ligand>
</feature>
<feature type="binding site" evidence="1">
    <location>
        <position position="484"/>
    </location>
    <ligand>
        <name>Zn(2+)</name>
        <dbReference type="ChEBI" id="CHEBI:29105"/>
        <note>catalytic</note>
    </ligand>
</feature>
<feature type="binding site" evidence="1">
    <location>
        <position position="488"/>
    </location>
    <ligand>
        <name>Zn(2+)</name>
        <dbReference type="ChEBI" id="CHEBI:29105"/>
        <note>catalytic</note>
    </ligand>
</feature>
<feature type="binding site" evidence="1">
    <location>
        <position position="561"/>
    </location>
    <ligand>
        <name>Zn(2+)</name>
        <dbReference type="ChEBI" id="CHEBI:29105"/>
        <note>catalytic</note>
    </ligand>
</feature>
<protein>
    <recommendedName>
        <fullName evidence="1">ATP-dependent zinc metalloprotease FtsH</fullName>
        <ecNumber evidence="1">3.4.24.-</ecNumber>
    </recommendedName>
</protein>
<keyword id="KW-0067">ATP-binding</keyword>
<keyword id="KW-0997">Cell inner membrane</keyword>
<keyword id="KW-1003">Cell membrane</keyword>
<keyword id="KW-0378">Hydrolase</keyword>
<keyword id="KW-0472">Membrane</keyword>
<keyword id="KW-0479">Metal-binding</keyword>
<keyword id="KW-0482">Metalloprotease</keyword>
<keyword id="KW-0547">Nucleotide-binding</keyword>
<keyword id="KW-0645">Protease</keyword>
<keyword id="KW-1185">Reference proteome</keyword>
<keyword id="KW-0812">Transmembrane</keyword>
<keyword id="KW-1133">Transmembrane helix</keyword>
<keyword id="KW-0862">Zinc</keyword>
<sequence length="700" mass="76550">MSSDNGSGRQGGDRGGSTGYNLLMYLGFGAIIATLVALYVLQMFQTSLDYTDLERLVAASQYEKDESKLTAGSPGYIDVKVEARNTLRRMRVSNLRKVELGPTAVRGQIDLVELKPVGTSGDRWEPDSKTLRQNVEFRTNLSDKGSNRDDIETAIRNSNIPFRHADPPGPWEQHSQLIIGMLLAAMLIYIVVRRLSAAGSPMSFGRSRGKLYAQEELGITFNDVAGIDEAVEEVREVVDFLRSPEKYQKLGGRIPKGVLLVGPPGTGKTLLAKAIAGEAGVPFFSLSGSDFVEMFVGVGAARVRDMFQQAEAKAPCIIFIDELDALGKSRGAGIMGGHDEREQTLNALLVEMDGFGSNSGVIVMAATNRPETLDPALLRPGRFDRHVLVDRPDIKGREDILKVHVKNVKLDPTVDLHKVAAITPGFVGADLANLVNEAALLAARAEKTAVGMNEFNEGVERVTAGLEKKQRVMNEDEKLRVAYHESGHALVAYSLPNTDPVHKVSIIPRGLAALGYTMQRPEGDRFLMTQSELESRIQVLLAGTIAEEIIFTDISTGAQNDLERATDIARRMCMEFGMSRLGRVNYRESNRSAFLASGGSGEERVRSVSEQTLREIDQEVRRIIDESIEKVRHILDVRRGALVSLTNRLMEVESVDSDELKRIIDETSPGPLVVPGTLPANTMRSTTEPVITAPATERSG</sequence>
<accession>D2QZ34</accession>
<evidence type="ECO:0000255" key="1">
    <source>
        <dbReference type="HAMAP-Rule" id="MF_01458"/>
    </source>
</evidence>
<comment type="function">
    <text evidence="1">Acts as a processive, ATP-dependent zinc metallopeptidase for both cytoplasmic and membrane proteins. Plays a role in the quality control of integral membrane proteins.</text>
</comment>
<comment type="cofactor">
    <cofactor evidence="1">
        <name>Zn(2+)</name>
        <dbReference type="ChEBI" id="CHEBI:29105"/>
    </cofactor>
    <text evidence="1">Binds 1 zinc ion per subunit.</text>
</comment>
<comment type="subunit">
    <text evidence="1">Homohexamer.</text>
</comment>
<comment type="subcellular location">
    <subcellularLocation>
        <location evidence="1">Cell inner membrane</location>
        <topology evidence="1">Multi-pass membrane protein</topology>
        <orientation evidence="1">Cytoplasmic side</orientation>
    </subcellularLocation>
</comment>
<comment type="similarity">
    <text evidence="1">In the central section; belongs to the AAA ATPase family.</text>
</comment>
<comment type="similarity">
    <text evidence="1">In the C-terminal section; belongs to the peptidase M41 family.</text>
</comment>